<reference key="1">
    <citation type="journal article" date="2004" name="Proc. Natl. Acad. Sci. U.S.A.">
        <title>Insights into the evolution of Yersinia pestis through whole-genome comparison with Yersinia pseudotuberculosis.</title>
        <authorList>
            <person name="Chain P.S.G."/>
            <person name="Carniel E."/>
            <person name="Larimer F.W."/>
            <person name="Lamerdin J."/>
            <person name="Stoutland P.O."/>
            <person name="Regala W.M."/>
            <person name="Georgescu A.M."/>
            <person name="Vergez L.M."/>
            <person name="Land M.L."/>
            <person name="Motin V.L."/>
            <person name="Brubaker R.R."/>
            <person name="Fowler J."/>
            <person name="Hinnebusch J."/>
            <person name="Marceau M."/>
            <person name="Medigue C."/>
            <person name="Simonet M."/>
            <person name="Chenal-Francisque V."/>
            <person name="Souza B."/>
            <person name="Dacheux D."/>
            <person name="Elliott J.M."/>
            <person name="Derbise A."/>
            <person name="Hauser L.J."/>
            <person name="Garcia E."/>
        </authorList>
    </citation>
    <scope>NUCLEOTIDE SEQUENCE [LARGE SCALE GENOMIC DNA]</scope>
    <source>
        <strain>IP32953</strain>
    </source>
</reference>
<proteinExistence type="inferred from homology"/>
<comment type="function">
    <text evidence="1">Catalyzes the tRNA-independent activation of glutamate in presence of ATP and the subsequent transfer of glutamate onto a tRNA(Asp). Glutamate is transferred on the 2-amino-5-(4,5-dihydroxy-2-cyclopenten-1-yl) moiety of the queuosine in the wobble position of the QUC anticodon.</text>
</comment>
<comment type="cofactor">
    <cofactor evidence="1">
        <name>Zn(2+)</name>
        <dbReference type="ChEBI" id="CHEBI:29105"/>
    </cofactor>
    <text evidence="1">Binds 1 zinc ion per subunit.</text>
</comment>
<comment type="similarity">
    <text evidence="1">Belongs to the class-I aminoacyl-tRNA synthetase family. GluQ subfamily.</text>
</comment>
<dbReference type="EC" id="6.1.1.-" evidence="1"/>
<dbReference type="EMBL" id="BX936398">
    <property type="protein sequence ID" value="CAH19973.1"/>
    <property type="molecule type" value="Genomic_DNA"/>
</dbReference>
<dbReference type="SMR" id="Q66EG0"/>
<dbReference type="KEGG" id="ypo:BZ17_1822"/>
<dbReference type="KEGG" id="yps:YPTB0733"/>
<dbReference type="PATRIC" id="fig|273123.14.peg.1932"/>
<dbReference type="Proteomes" id="UP000001011">
    <property type="component" value="Chromosome"/>
</dbReference>
<dbReference type="GO" id="GO:0005829">
    <property type="term" value="C:cytosol"/>
    <property type="evidence" value="ECO:0007669"/>
    <property type="project" value="TreeGrafter"/>
</dbReference>
<dbReference type="GO" id="GO:0005524">
    <property type="term" value="F:ATP binding"/>
    <property type="evidence" value="ECO:0007669"/>
    <property type="project" value="UniProtKB-KW"/>
</dbReference>
<dbReference type="GO" id="GO:0004818">
    <property type="term" value="F:glutamate-tRNA ligase activity"/>
    <property type="evidence" value="ECO:0007669"/>
    <property type="project" value="TreeGrafter"/>
</dbReference>
<dbReference type="GO" id="GO:0008270">
    <property type="term" value="F:zinc ion binding"/>
    <property type="evidence" value="ECO:0007669"/>
    <property type="project" value="UniProtKB-UniRule"/>
</dbReference>
<dbReference type="GO" id="GO:0006424">
    <property type="term" value="P:glutamyl-tRNA aminoacylation"/>
    <property type="evidence" value="ECO:0007669"/>
    <property type="project" value="InterPro"/>
</dbReference>
<dbReference type="GO" id="GO:0006400">
    <property type="term" value="P:tRNA modification"/>
    <property type="evidence" value="ECO:0007669"/>
    <property type="project" value="InterPro"/>
</dbReference>
<dbReference type="FunFam" id="3.40.50.620:FF:000093">
    <property type="entry name" value="Glutamyl-Q tRNA(Asp) synthetase"/>
    <property type="match status" value="1"/>
</dbReference>
<dbReference type="Gene3D" id="3.40.50.620">
    <property type="entry name" value="HUPs"/>
    <property type="match status" value="1"/>
</dbReference>
<dbReference type="HAMAP" id="MF_01428">
    <property type="entry name" value="Glu_Q_tRNA_synth"/>
    <property type="match status" value="1"/>
</dbReference>
<dbReference type="InterPro" id="IPR022380">
    <property type="entry name" value="Glu-Q_tRNA(Asp)_Synthase"/>
</dbReference>
<dbReference type="InterPro" id="IPR000924">
    <property type="entry name" value="Glu/Gln-tRNA-synth"/>
</dbReference>
<dbReference type="InterPro" id="IPR020058">
    <property type="entry name" value="Glu/Gln-tRNA-synth_Ib_cat-dom"/>
</dbReference>
<dbReference type="InterPro" id="IPR049940">
    <property type="entry name" value="GluQ/Sye"/>
</dbReference>
<dbReference type="InterPro" id="IPR014729">
    <property type="entry name" value="Rossmann-like_a/b/a_fold"/>
</dbReference>
<dbReference type="NCBIfam" id="NF004312">
    <property type="entry name" value="PRK05710.1-1"/>
    <property type="match status" value="1"/>
</dbReference>
<dbReference type="NCBIfam" id="NF004314">
    <property type="entry name" value="PRK05710.1-3"/>
    <property type="match status" value="1"/>
</dbReference>
<dbReference type="NCBIfam" id="TIGR03838">
    <property type="entry name" value="queuosine_YadB"/>
    <property type="match status" value="1"/>
</dbReference>
<dbReference type="PANTHER" id="PTHR43311">
    <property type="entry name" value="GLUTAMATE--TRNA LIGASE"/>
    <property type="match status" value="1"/>
</dbReference>
<dbReference type="PANTHER" id="PTHR43311:SF1">
    <property type="entry name" value="GLUTAMYL-Q TRNA(ASP) SYNTHETASE"/>
    <property type="match status" value="1"/>
</dbReference>
<dbReference type="Pfam" id="PF00749">
    <property type="entry name" value="tRNA-synt_1c"/>
    <property type="match status" value="1"/>
</dbReference>
<dbReference type="PRINTS" id="PR00987">
    <property type="entry name" value="TRNASYNTHGLU"/>
</dbReference>
<dbReference type="SUPFAM" id="SSF52374">
    <property type="entry name" value="Nucleotidylyl transferase"/>
    <property type="match status" value="1"/>
</dbReference>
<gene>
    <name evidence="1" type="primary">gluQ</name>
    <name type="ordered locus">YPTB0733</name>
</gene>
<feature type="chain" id="PRO_0000208340" description="Glutamyl-Q tRNA(Asp) synthetase">
    <location>
        <begin position="1"/>
        <end position="331"/>
    </location>
</feature>
<feature type="region of interest" description="Disordered" evidence="2">
    <location>
        <begin position="1"/>
        <end position="36"/>
    </location>
</feature>
<feature type="short sequence motif" description="'HIGH' region">
    <location>
        <begin position="38"/>
        <end position="48"/>
    </location>
</feature>
<feature type="short sequence motif" description="'KMSKS' region">
    <location>
        <begin position="254"/>
        <end position="258"/>
    </location>
</feature>
<feature type="compositionally biased region" description="Polar residues" evidence="2">
    <location>
        <begin position="1"/>
        <end position="30"/>
    </location>
</feature>
<feature type="binding site" evidence="1">
    <location>
        <begin position="35"/>
        <end position="39"/>
    </location>
    <ligand>
        <name>L-glutamate</name>
        <dbReference type="ChEBI" id="CHEBI:29985"/>
    </ligand>
</feature>
<feature type="binding site" evidence="1">
    <location>
        <position position="71"/>
    </location>
    <ligand>
        <name>L-glutamate</name>
        <dbReference type="ChEBI" id="CHEBI:29985"/>
    </ligand>
</feature>
<feature type="binding site" evidence="1">
    <location>
        <position position="127"/>
    </location>
    <ligand>
        <name>Zn(2+)</name>
        <dbReference type="ChEBI" id="CHEBI:29105"/>
    </ligand>
</feature>
<feature type="binding site" evidence="1">
    <location>
        <position position="129"/>
    </location>
    <ligand>
        <name>Zn(2+)</name>
        <dbReference type="ChEBI" id="CHEBI:29105"/>
    </ligand>
</feature>
<feature type="binding site" evidence="1">
    <location>
        <position position="141"/>
    </location>
    <ligand>
        <name>Zn(2+)</name>
        <dbReference type="ChEBI" id="CHEBI:29105"/>
    </ligand>
</feature>
<feature type="binding site" evidence="1">
    <location>
        <position position="145"/>
    </location>
    <ligand>
        <name>Zn(2+)</name>
        <dbReference type="ChEBI" id="CHEBI:29105"/>
    </ligand>
</feature>
<feature type="binding site" evidence="1">
    <location>
        <position position="198"/>
    </location>
    <ligand>
        <name>L-glutamate</name>
        <dbReference type="ChEBI" id="CHEBI:29985"/>
    </ligand>
</feature>
<feature type="binding site" evidence="1">
    <location>
        <position position="216"/>
    </location>
    <ligand>
        <name>L-glutamate</name>
        <dbReference type="ChEBI" id="CHEBI:29985"/>
    </ligand>
</feature>
<feature type="binding site" evidence="1">
    <location>
        <position position="257"/>
    </location>
    <ligand>
        <name>ATP</name>
        <dbReference type="ChEBI" id="CHEBI:30616"/>
    </ligand>
</feature>
<evidence type="ECO:0000255" key="1">
    <source>
        <dbReference type="HAMAP-Rule" id="MF_01428"/>
    </source>
</evidence>
<evidence type="ECO:0000256" key="2">
    <source>
        <dbReference type="SAM" id="MobiDB-lite"/>
    </source>
</evidence>
<organism>
    <name type="scientific">Yersinia pseudotuberculosis serotype I (strain IP32953)</name>
    <dbReference type="NCBI Taxonomy" id="273123"/>
    <lineage>
        <taxon>Bacteria</taxon>
        <taxon>Pseudomonadati</taxon>
        <taxon>Pseudomonadota</taxon>
        <taxon>Gammaproteobacteria</taxon>
        <taxon>Enterobacterales</taxon>
        <taxon>Yersiniaceae</taxon>
        <taxon>Yersinia</taxon>
    </lineage>
</organism>
<accession>Q66EG0</accession>
<keyword id="KW-0030">Aminoacyl-tRNA synthetase</keyword>
<keyword id="KW-0067">ATP-binding</keyword>
<keyword id="KW-0436">Ligase</keyword>
<keyword id="KW-0479">Metal-binding</keyword>
<keyword id="KW-0547">Nucleotide-binding</keyword>
<keyword id="KW-0862">Zinc</keyword>
<sequence>MVQQAVIQRSANQQLSNQRSANQRATNQPTEYVGRFAPSPSGDLHFGSLIAALGSYLQARAQGGKWLVRIEDIDPPREVPGAASRILAALEHYGLHWDGPVIYQSQRHEAYRATLNWLEQQGLSYYCTCTRSRIHQLGGFYDGYCRDRHLPASGAAIRLRQTQPVYAFYDKLLGELHAHPALAQEDFIIRRRDGLFAYNLAVVVDDAFQGVTEIVRGADLIEPTVRQIALYQQLQHPVPSYIHLPLALNNQGNKLSKQNHAPPLPNGDPRPILIDALKFLRQPLPEYWQDLDLYLLLRYAVEHWTLVSIPLQGAITPQKTQRHSQSKHGEL</sequence>
<name>GLUQ_YERPS</name>
<protein>
    <recommendedName>
        <fullName evidence="1">Glutamyl-Q tRNA(Asp) synthetase</fullName>
        <shortName evidence="1">Glu-Q-RSs</shortName>
        <ecNumber evidence="1">6.1.1.-</ecNumber>
    </recommendedName>
</protein>